<evidence type="ECO:0000255" key="1">
    <source>
        <dbReference type="HAMAP-Rule" id="MF_01306"/>
    </source>
</evidence>
<evidence type="ECO:0000256" key="2">
    <source>
        <dbReference type="SAM" id="MobiDB-lite"/>
    </source>
</evidence>
<evidence type="ECO:0000305" key="3"/>
<gene>
    <name evidence="1" type="primary">rpsD</name>
    <name type="ordered locus">Jann_0954</name>
</gene>
<organism>
    <name type="scientific">Jannaschia sp. (strain CCS1)</name>
    <dbReference type="NCBI Taxonomy" id="290400"/>
    <lineage>
        <taxon>Bacteria</taxon>
        <taxon>Pseudomonadati</taxon>
        <taxon>Pseudomonadota</taxon>
        <taxon>Alphaproteobacteria</taxon>
        <taxon>Rhodobacterales</taxon>
        <taxon>Roseobacteraceae</taxon>
        <taxon>Jannaschia</taxon>
    </lineage>
</organism>
<accession>Q28TU1</accession>
<protein>
    <recommendedName>
        <fullName evidence="1">Small ribosomal subunit protein uS4</fullName>
    </recommendedName>
    <alternativeName>
        <fullName evidence="3">30S ribosomal protein S4</fullName>
    </alternativeName>
</protein>
<feature type="chain" id="PRO_0000293294" description="Small ribosomal subunit protein uS4">
    <location>
        <begin position="1"/>
        <end position="206"/>
    </location>
</feature>
<feature type="domain" description="S4 RNA-binding" evidence="1">
    <location>
        <begin position="94"/>
        <end position="157"/>
    </location>
</feature>
<feature type="region of interest" description="Disordered" evidence="2">
    <location>
        <begin position="18"/>
        <end position="44"/>
    </location>
</feature>
<proteinExistence type="inferred from homology"/>
<dbReference type="EMBL" id="CP000264">
    <property type="protein sequence ID" value="ABD53871.1"/>
    <property type="molecule type" value="Genomic_DNA"/>
</dbReference>
<dbReference type="RefSeq" id="WP_011454079.1">
    <property type="nucleotide sequence ID" value="NC_007802.1"/>
</dbReference>
<dbReference type="SMR" id="Q28TU1"/>
<dbReference type="STRING" id="290400.Jann_0954"/>
<dbReference type="KEGG" id="jan:Jann_0954"/>
<dbReference type="eggNOG" id="COG0522">
    <property type="taxonomic scope" value="Bacteria"/>
</dbReference>
<dbReference type="HOGENOM" id="CLU_092403_0_0_5"/>
<dbReference type="OrthoDB" id="9803672at2"/>
<dbReference type="Proteomes" id="UP000008326">
    <property type="component" value="Chromosome"/>
</dbReference>
<dbReference type="GO" id="GO:0015935">
    <property type="term" value="C:small ribosomal subunit"/>
    <property type="evidence" value="ECO:0007669"/>
    <property type="project" value="InterPro"/>
</dbReference>
<dbReference type="GO" id="GO:0019843">
    <property type="term" value="F:rRNA binding"/>
    <property type="evidence" value="ECO:0007669"/>
    <property type="project" value="UniProtKB-UniRule"/>
</dbReference>
<dbReference type="GO" id="GO:0003735">
    <property type="term" value="F:structural constituent of ribosome"/>
    <property type="evidence" value="ECO:0007669"/>
    <property type="project" value="InterPro"/>
</dbReference>
<dbReference type="GO" id="GO:0042274">
    <property type="term" value="P:ribosomal small subunit biogenesis"/>
    <property type="evidence" value="ECO:0007669"/>
    <property type="project" value="TreeGrafter"/>
</dbReference>
<dbReference type="GO" id="GO:0006412">
    <property type="term" value="P:translation"/>
    <property type="evidence" value="ECO:0007669"/>
    <property type="project" value="UniProtKB-UniRule"/>
</dbReference>
<dbReference type="CDD" id="cd00165">
    <property type="entry name" value="S4"/>
    <property type="match status" value="1"/>
</dbReference>
<dbReference type="FunFam" id="3.10.290.10:FF:000001">
    <property type="entry name" value="30S ribosomal protein S4"/>
    <property type="match status" value="1"/>
</dbReference>
<dbReference type="Gene3D" id="1.10.1050.10">
    <property type="entry name" value="Ribosomal Protein S4 Delta 41, Chain A, domain 1"/>
    <property type="match status" value="1"/>
</dbReference>
<dbReference type="Gene3D" id="3.10.290.10">
    <property type="entry name" value="RNA-binding S4 domain"/>
    <property type="match status" value="1"/>
</dbReference>
<dbReference type="HAMAP" id="MF_01306_B">
    <property type="entry name" value="Ribosomal_uS4_B"/>
    <property type="match status" value="1"/>
</dbReference>
<dbReference type="InterPro" id="IPR022801">
    <property type="entry name" value="Ribosomal_uS4"/>
</dbReference>
<dbReference type="InterPro" id="IPR005709">
    <property type="entry name" value="Ribosomal_uS4_bac-type"/>
</dbReference>
<dbReference type="InterPro" id="IPR018079">
    <property type="entry name" value="Ribosomal_uS4_CS"/>
</dbReference>
<dbReference type="InterPro" id="IPR001912">
    <property type="entry name" value="Ribosomal_uS4_N"/>
</dbReference>
<dbReference type="InterPro" id="IPR002942">
    <property type="entry name" value="S4_RNA-bd"/>
</dbReference>
<dbReference type="InterPro" id="IPR036986">
    <property type="entry name" value="S4_RNA-bd_sf"/>
</dbReference>
<dbReference type="NCBIfam" id="NF003717">
    <property type="entry name" value="PRK05327.1"/>
    <property type="match status" value="1"/>
</dbReference>
<dbReference type="NCBIfam" id="TIGR01017">
    <property type="entry name" value="rpsD_bact"/>
    <property type="match status" value="1"/>
</dbReference>
<dbReference type="PANTHER" id="PTHR11831">
    <property type="entry name" value="30S 40S RIBOSOMAL PROTEIN"/>
    <property type="match status" value="1"/>
</dbReference>
<dbReference type="PANTHER" id="PTHR11831:SF4">
    <property type="entry name" value="SMALL RIBOSOMAL SUBUNIT PROTEIN US4M"/>
    <property type="match status" value="1"/>
</dbReference>
<dbReference type="Pfam" id="PF00163">
    <property type="entry name" value="Ribosomal_S4"/>
    <property type="match status" value="1"/>
</dbReference>
<dbReference type="Pfam" id="PF01479">
    <property type="entry name" value="S4"/>
    <property type="match status" value="1"/>
</dbReference>
<dbReference type="SMART" id="SM01390">
    <property type="entry name" value="Ribosomal_S4"/>
    <property type="match status" value="1"/>
</dbReference>
<dbReference type="SMART" id="SM00363">
    <property type="entry name" value="S4"/>
    <property type="match status" value="1"/>
</dbReference>
<dbReference type="SUPFAM" id="SSF55174">
    <property type="entry name" value="Alpha-L RNA-binding motif"/>
    <property type="match status" value="1"/>
</dbReference>
<dbReference type="PROSITE" id="PS00632">
    <property type="entry name" value="RIBOSOMAL_S4"/>
    <property type="match status" value="1"/>
</dbReference>
<dbReference type="PROSITE" id="PS50889">
    <property type="entry name" value="S4"/>
    <property type="match status" value="1"/>
</dbReference>
<name>RS4_JANSC</name>
<sequence>MTKRTSAKYKIDRRMGENIWGRPKSPVNRREYGPGQHGQRRKGKLSDFGLQLRAKQKLKGYYGDLTEKQFRRIYAEAERLRGDTGEFLIGLLERRLDAVVYRAKFVPTVFAARQFVNHGHVTVNGQKVNIPSYRVKEGDVIAVRDKSKQLAVVLEAVGLAERDVPDYVDADHSKMTATFVRTPGLSDVPYPVVMEPNLVVEFYAKN</sequence>
<comment type="function">
    <text evidence="1">One of the primary rRNA binding proteins, it binds directly to 16S rRNA where it nucleates assembly of the body of the 30S subunit.</text>
</comment>
<comment type="function">
    <text evidence="1">With S5 and S12 plays an important role in translational accuracy.</text>
</comment>
<comment type="subunit">
    <text evidence="1">Part of the 30S ribosomal subunit. Contacts protein S5. The interaction surface between S4 and S5 is involved in control of translational fidelity.</text>
</comment>
<comment type="similarity">
    <text evidence="1">Belongs to the universal ribosomal protein uS4 family.</text>
</comment>
<reference key="1">
    <citation type="submission" date="2006-02" db="EMBL/GenBank/DDBJ databases">
        <title>Complete sequence of chromosome of Jannaschia sp. CCS1.</title>
        <authorList>
            <consortium name="US DOE Joint Genome Institute"/>
            <person name="Copeland A."/>
            <person name="Lucas S."/>
            <person name="Lapidus A."/>
            <person name="Barry K."/>
            <person name="Detter J.C."/>
            <person name="Glavina del Rio T."/>
            <person name="Hammon N."/>
            <person name="Israni S."/>
            <person name="Pitluck S."/>
            <person name="Brettin T."/>
            <person name="Bruce D."/>
            <person name="Han C."/>
            <person name="Tapia R."/>
            <person name="Gilna P."/>
            <person name="Chertkov O."/>
            <person name="Saunders E."/>
            <person name="Schmutz J."/>
            <person name="Larimer F."/>
            <person name="Land M."/>
            <person name="Kyrpides N."/>
            <person name="Lykidis A."/>
            <person name="Moran M.A."/>
            <person name="Belas R."/>
            <person name="Ye W."/>
            <person name="Buchan A."/>
            <person name="Gonzalez J.M."/>
            <person name="Schell M.A."/>
            <person name="Richardson P."/>
        </authorList>
    </citation>
    <scope>NUCLEOTIDE SEQUENCE [LARGE SCALE GENOMIC DNA]</scope>
    <source>
        <strain>CCS1</strain>
    </source>
</reference>
<keyword id="KW-1185">Reference proteome</keyword>
<keyword id="KW-0687">Ribonucleoprotein</keyword>
<keyword id="KW-0689">Ribosomal protein</keyword>
<keyword id="KW-0694">RNA-binding</keyword>
<keyword id="KW-0699">rRNA-binding</keyword>